<organismHost>
    <name type="scientific">Acanthamoeba polyphaga</name>
    <name type="common">Amoeba</name>
    <dbReference type="NCBI Taxonomy" id="5757"/>
</organismHost>
<sequence length="445" mass="52636">MSDIYYQLPVEIWLQIIFFSDNINLLFVDKNFFGLIKLINDKKPIIKKIINQNYFDVLRYAIKNCIGIFGDNFMEDCLRQSFYDGQLYIADYLVDKGADIYSMGNLYFITTNETENHNNFRYVDGLNVLQGKFNKKTGFYVHKPETICQYLNHNIYLRDVYLPKGKTGFKKFKLENYYVANMIVLGKQRNLIDLDTWKYMIYHGTIITEGVIEYCRINKCTKIVDYLLDCLIETNHNIDIYTACKNGYTKLAIHYIKNSIICREIRYYIMSRGTYWTDNKSENINHEHIANLATQNGHIEILKYLVEEKYELVGNLYIIMFLACQYGHLEIIKYLVELGVDIRQGLDAFIYLLWQGSYFNILKYLLTVDSDIINIINKVDYNGWFKMYLKDPLSIDSNHYIHPYTISELKCRINSPICKPIYYLRNKSIGTIDFDDFNDIDGFND</sequence>
<gene>
    <name type="ordered locus">MIMI_R797</name>
</gene>
<feature type="chain" id="PRO_0000067203" description="Putative ankyrin repeat protein L797">
    <location>
        <begin position="1"/>
        <end position="445"/>
    </location>
</feature>
<feature type="repeat" description="ANK 1">
    <location>
        <begin position="73"/>
        <end position="102"/>
    </location>
</feature>
<feature type="repeat" description="ANK 2">
    <location>
        <begin position="285"/>
        <end position="314"/>
    </location>
</feature>
<feature type="repeat" description="ANK 3">
    <location>
        <begin position="315"/>
        <end position="344"/>
    </location>
</feature>
<feature type="repeat" description="ANK 4">
    <location>
        <begin position="346"/>
        <end position="375"/>
    </location>
</feature>
<accession>Q5UQ38</accession>
<dbReference type="EMBL" id="AY653733">
    <property type="protein sequence ID" value="AAV51057.1"/>
    <property type="molecule type" value="Genomic_DNA"/>
</dbReference>
<dbReference type="SMR" id="Q5UQ38"/>
<dbReference type="KEGG" id="vg:9925459"/>
<dbReference type="OrthoDB" id="8173at10239"/>
<dbReference type="Proteomes" id="UP000001134">
    <property type="component" value="Genome"/>
</dbReference>
<dbReference type="Gene3D" id="1.25.40.20">
    <property type="entry name" value="Ankyrin repeat-containing domain"/>
    <property type="match status" value="1"/>
</dbReference>
<dbReference type="InterPro" id="IPR002110">
    <property type="entry name" value="Ankyrin_rpt"/>
</dbReference>
<dbReference type="InterPro" id="IPR036770">
    <property type="entry name" value="Ankyrin_rpt-contain_sf"/>
</dbReference>
<dbReference type="PANTHER" id="PTHR24188">
    <property type="entry name" value="ANKYRIN REPEAT PROTEIN"/>
    <property type="match status" value="1"/>
</dbReference>
<dbReference type="PANTHER" id="PTHR24188:SF29">
    <property type="entry name" value="GH09064P"/>
    <property type="match status" value="1"/>
</dbReference>
<dbReference type="Pfam" id="PF12796">
    <property type="entry name" value="Ank_2"/>
    <property type="match status" value="1"/>
</dbReference>
<dbReference type="SMART" id="SM00248">
    <property type="entry name" value="ANK"/>
    <property type="match status" value="3"/>
</dbReference>
<dbReference type="SUPFAM" id="SSF48403">
    <property type="entry name" value="Ankyrin repeat"/>
    <property type="match status" value="1"/>
</dbReference>
<keyword id="KW-0040">ANK repeat</keyword>
<keyword id="KW-1185">Reference proteome</keyword>
<keyword id="KW-0677">Repeat</keyword>
<reference key="1">
    <citation type="journal article" date="2004" name="Science">
        <title>The 1.2-megabase genome sequence of Mimivirus.</title>
        <authorList>
            <person name="Raoult D."/>
            <person name="Audic S."/>
            <person name="Robert C."/>
            <person name="Abergel C."/>
            <person name="Renesto P."/>
            <person name="Ogata H."/>
            <person name="La Scola B."/>
            <person name="Susan M."/>
            <person name="Claverie J.-M."/>
        </authorList>
    </citation>
    <scope>NUCLEOTIDE SEQUENCE [LARGE SCALE GENOMIC DNA]</scope>
    <source>
        <strain>Rowbotham-Bradford</strain>
    </source>
</reference>
<proteinExistence type="predicted"/>
<organism>
    <name type="scientific">Acanthamoeba polyphaga mimivirus</name>
    <name type="common">APMV</name>
    <dbReference type="NCBI Taxonomy" id="212035"/>
    <lineage>
        <taxon>Viruses</taxon>
        <taxon>Varidnaviria</taxon>
        <taxon>Bamfordvirae</taxon>
        <taxon>Nucleocytoviricota</taxon>
        <taxon>Megaviricetes</taxon>
        <taxon>Imitervirales</taxon>
        <taxon>Mimiviridae</taxon>
        <taxon>Megamimivirinae</taxon>
        <taxon>Mimivirus</taxon>
        <taxon>Mimivirus bradfordmassiliense</taxon>
    </lineage>
</organism>
<name>YR797_MIMIV</name>
<protein>
    <recommendedName>
        <fullName>Putative ankyrin repeat protein L797</fullName>
    </recommendedName>
</protein>